<sequence length="421" mass="47093">MSKTHLTEQKFSDFALHPKVVEALEKKGFHNCTPIQALALPLTLAGRDVAGQAQTGTGKTMAFLTSTFHCLLSHPAIADRKVNQPRALIMAPTRELAVQIHADAEPLAEATGLKLGLAYGGDGYDKQLKVLESGVDILIGTTGRLIDYAKQNHINLGAIQVVVLDEADRMYDLGFIKDIRWLFRRMPPANQRLNMLFSATLSYRVRELAFEQMNNAEYIEVEPEQKTGHRIKEELFYPSNEEKMRLLQTLIEEEWPDRAIIFANTKHRCEEIWGHLAADGHRVGLLTGDVAQKKRLRILDEFTRGDLDILVATDVAARGLHIPAVTHVFNYDLPDDCEDYVHRIGRTGRAGANGHSISLACEEYALNLPAIETYIGHSIPVSKYNPDALMTDLPKPLRLTRPRTGNGPRRTGAPRNRRRSG</sequence>
<proteinExistence type="inferred from homology"/>
<reference key="1">
    <citation type="journal article" date="2001" name="Nature">
        <title>Genome sequence of enterohaemorrhagic Escherichia coli O157:H7.</title>
        <authorList>
            <person name="Perna N.T."/>
            <person name="Plunkett G. III"/>
            <person name="Burland V."/>
            <person name="Mau B."/>
            <person name="Glasner J.D."/>
            <person name="Rose D.J."/>
            <person name="Mayhew G.F."/>
            <person name="Evans P.S."/>
            <person name="Gregor J."/>
            <person name="Kirkpatrick H.A."/>
            <person name="Posfai G."/>
            <person name="Hackett J."/>
            <person name="Klink S."/>
            <person name="Boutin A."/>
            <person name="Shao Y."/>
            <person name="Miller L."/>
            <person name="Grotbeck E.J."/>
            <person name="Davis N.W."/>
            <person name="Lim A."/>
            <person name="Dimalanta E.T."/>
            <person name="Potamousis K."/>
            <person name="Apodaca J."/>
            <person name="Anantharaman T.S."/>
            <person name="Lin J."/>
            <person name="Yen G."/>
            <person name="Schwartz D.C."/>
            <person name="Welch R.A."/>
            <person name="Blattner F.R."/>
        </authorList>
    </citation>
    <scope>NUCLEOTIDE SEQUENCE [LARGE SCALE GENOMIC DNA]</scope>
    <source>
        <strain>O157:H7 / EDL933 / ATCC 700927 / EHEC</strain>
    </source>
</reference>
<reference key="2">
    <citation type="journal article" date="2001" name="DNA Res.">
        <title>Complete genome sequence of enterohemorrhagic Escherichia coli O157:H7 and genomic comparison with a laboratory strain K-12.</title>
        <authorList>
            <person name="Hayashi T."/>
            <person name="Makino K."/>
            <person name="Ohnishi M."/>
            <person name="Kurokawa K."/>
            <person name="Ishii K."/>
            <person name="Yokoyama K."/>
            <person name="Han C.-G."/>
            <person name="Ohtsubo E."/>
            <person name="Nakayama K."/>
            <person name="Murata T."/>
            <person name="Tanaka M."/>
            <person name="Tobe T."/>
            <person name="Iida T."/>
            <person name="Takami H."/>
            <person name="Honda T."/>
            <person name="Sasakawa C."/>
            <person name="Ogasawara N."/>
            <person name="Yasunaga T."/>
            <person name="Kuhara S."/>
            <person name="Shiba T."/>
            <person name="Hattori M."/>
            <person name="Shinagawa H."/>
        </authorList>
    </citation>
    <scope>NUCLEOTIDE SEQUENCE [LARGE SCALE GENOMIC DNA]</scope>
    <source>
        <strain>O157:H7 / Sakai / RIMD 0509952 / EHEC</strain>
    </source>
</reference>
<protein>
    <recommendedName>
        <fullName evidence="2">ATP-dependent RNA helicase RhlB</fullName>
        <ecNumber evidence="2">3.6.4.13</ecNumber>
    </recommendedName>
</protein>
<comment type="function">
    <text evidence="2">DEAD-box RNA helicase involved in RNA degradation. Has RNA-dependent ATPase activity and unwinds double-stranded RNA.</text>
</comment>
<comment type="catalytic activity">
    <reaction evidence="2">
        <text>ATP + H2O = ADP + phosphate + H(+)</text>
        <dbReference type="Rhea" id="RHEA:13065"/>
        <dbReference type="ChEBI" id="CHEBI:15377"/>
        <dbReference type="ChEBI" id="CHEBI:15378"/>
        <dbReference type="ChEBI" id="CHEBI:30616"/>
        <dbReference type="ChEBI" id="CHEBI:43474"/>
        <dbReference type="ChEBI" id="CHEBI:456216"/>
        <dbReference type="EC" id="3.6.4.13"/>
    </reaction>
</comment>
<comment type="subunit">
    <text evidence="2">Component of the RNA degradosome, which is a multiprotein complex involved in RNA processing and mRNA degradation.</text>
</comment>
<comment type="subcellular location">
    <subcellularLocation>
        <location evidence="2">Cytoplasm</location>
    </subcellularLocation>
</comment>
<comment type="similarity">
    <text evidence="2">Belongs to the DEAD box helicase family. RhlB subfamily.</text>
</comment>
<name>RHLB_ECO57</name>
<keyword id="KW-0067">ATP-binding</keyword>
<keyword id="KW-0963">Cytoplasm</keyword>
<keyword id="KW-0347">Helicase</keyword>
<keyword id="KW-0378">Hydrolase</keyword>
<keyword id="KW-0547">Nucleotide-binding</keyword>
<keyword id="KW-1185">Reference proteome</keyword>
<keyword id="KW-0694">RNA-binding</keyword>
<accession>Q8XAT4</accession>
<evidence type="ECO:0000250" key="1"/>
<evidence type="ECO:0000255" key="2">
    <source>
        <dbReference type="HAMAP-Rule" id="MF_00661"/>
    </source>
</evidence>
<evidence type="ECO:0000256" key="3">
    <source>
        <dbReference type="SAM" id="MobiDB-lite"/>
    </source>
</evidence>
<gene>
    <name evidence="2" type="primary">rhlB</name>
    <name type="ordered locus">Z5290</name>
    <name type="ordered locus">ECs4713</name>
</gene>
<feature type="initiator methionine" description="Removed" evidence="1">
    <location>
        <position position="1"/>
    </location>
</feature>
<feature type="chain" id="PRO_0000200770" description="ATP-dependent RNA helicase RhlB">
    <location>
        <begin position="2"/>
        <end position="421"/>
    </location>
</feature>
<feature type="domain" description="Helicase ATP-binding" evidence="2">
    <location>
        <begin position="40"/>
        <end position="219"/>
    </location>
</feature>
<feature type="domain" description="Helicase C-terminal" evidence="2">
    <location>
        <begin position="245"/>
        <end position="390"/>
    </location>
</feature>
<feature type="region of interest" description="Disordered" evidence="3">
    <location>
        <begin position="392"/>
        <end position="421"/>
    </location>
</feature>
<feature type="short sequence motif" description="Q motif">
    <location>
        <begin position="9"/>
        <end position="37"/>
    </location>
</feature>
<feature type="short sequence motif" description="DEAD box">
    <location>
        <begin position="165"/>
        <end position="168"/>
    </location>
</feature>
<feature type="compositionally biased region" description="Low complexity" evidence="3">
    <location>
        <begin position="402"/>
        <end position="414"/>
    </location>
</feature>
<feature type="binding site" evidence="2">
    <location>
        <begin position="53"/>
        <end position="60"/>
    </location>
    <ligand>
        <name>ATP</name>
        <dbReference type="ChEBI" id="CHEBI:30616"/>
    </ligand>
</feature>
<organism>
    <name type="scientific">Escherichia coli O157:H7</name>
    <dbReference type="NCBI Taxonomy" id="83334"/>
    <lineage>
        <taxon>Bacteria</taxon>
        <taxon>Pseudomonadati</taxon>
        <taxon>Pseudomonadota</taxon>
        <taxon>Gammaproteobacteria</taxon>
        <taxon>Enterobacterales</taxon>
        <taxon>Enterobacteriaceae</taxon>
        <taxon>Escherichia</taxon>
    </lineage>
</organism>
<dbReference type="EC" id="3.6.4.13" evidence="2"/>
<dbReference type="EMBL" id="AE005174">
    <property type="protein sequence ID" value="AAG58974.1"/>
    <property type="molecule type" value="Genomic_DNA"/>
</dbReference>
<dbReference type="EMBL" id="BA000007">
    <property type="protein sequence ID" value="BAB38136.1"/>
    <property type="molecule type" value="Genomic_DNA"/>
</dbReference>
<dbReference type="PIR" id="A91218">
    <property type="entry name" value="A91218"/>
</dbReference>
<dbReference type="PIR" id="B86064">
    <property type="entry name" value="B86064"/>
</dbReference>
<dbReference type="RefSeq" id="NP_312740.1">
    <property type="nucleotide sequence ID" value="NC_002695.1"/>
</dbReference>
<dbReference type="RefSeq" id="WP_000047490.1">
    <property type="nucleotide sequence ID" value="NZ_SDVX01000004.1"/>
</dbReference>
<dbReference type="SMR" id="Q8XAT4"/>
<dbReference type="STRING" id="155864.Z5290"/>
<dbReference type="GeneID" id="915257"/>
<dbReference type="KEGG" id="ece:Z5290"/>
<dbReference type="KEGG" id="ecs:ECs_4713"/>
<dbReference type="PATRIC" id="fig|386585.9.peg.4917"/>
<dbReference type="eggNOG" id="COG0513">
    <property type="taxonomic scope" value="Bacteria"/>
</dbReference>
<dbReference type="HOGENOM" id="CLU_003041_1_3_6"/>
<dbReference type="Proteomes" id="UP000000558">
    <property type="component" value="Chromosome"/>
</dbReference>
<dbReference type="Proteomes" id="UP000002519">
    <property type="component" value="Chromosome"/>
</dbReference>
<dbReference type="GO" id="GO:0005829">
    <property type="term" value="C:cytosol"/>
    <property type="evidence" value="ECO:0007669"/>
    <property type="project" value="TreeGrafter"/>
</dbReference>
<dbReference type="GO" id="GO:0005524">
    <property type="term" value="F:ATP binding"/>
    <property type="evidence" value="ECO:0007669"/>
    <property type="project" value="UniProtKB-UniRule"/>
</dbReference>
<dbReference type="GO" id="GO:0016887">
    <property type="term" value="F:ATP hydrolysis activity"/>
    <property type="evidence" value="ECO:0007669"/>
    <property type="project" value="RHEA"/>
</dbReference>
<dbReference type="GO" id="GO:0003723">
    <property type="term" value="F:RNA binding"/>
    <property type="evidence" value="ECO:0007669"/>
    <property type="project" value="UniProtKB-UniRule"/>
</dbReference>
<dbReference type="GO" id="GO:0003724">
    <property type="term" value="F:RNA helicase activity"/>
    <property type="evidence" value="ECO:0007669"/>
    <property type="project" value="UniProtKB-UniRule"/>
</dbReference>
<dbReference type="GO" id="GO:0006401">
    <property type="term" value="P:RNA catabolic process"/>
    <property type="evidence" value="ECO:0007669"/>
    <property type="project" value="UniProtKB-UniRule"/>
</dbReference>
<dbReference type="CDD" id="cd00268">
    <property type="entry name" value="DEADc"/>
    <property type="match status" value="1"/>
</dbReference>
<dbReference type="CDD" id="cd18787">
    <property type="entry name" value="SF2_C_DEAD"/>
    <property type="match status" value="1"/>
</dbReference>
<dbReference type="FunFam" id="3.40.50.300:FF:000008">
    <property type="entry name" value="ATP-dependent RNA helicase RhlB"/>
    <property type="match status" value="1"/>
</dbReference>
<dbReference type="FunFam" id="3.40.50.300:FF:000312">
    <property type="entry name" value="ATP-dependent RNA helicase RhlB"/>
    <property type="match status" value="1"/>
</dbReference>
<dbReference type="Gene3D" id="3.40.50.300">
    <property type="entry name" value="P-loop containing nucleotide triphosphate hydrolases"/>
    <property type="match status" value="2"/>
</dbReference>
<dbReference type="HAMAP" id="MF_00661">
    <property type="entry name" value="DEAD_helicase_RhlB"/>
    <property type="match status" value="1"/>
</dbReference>
<dbReference type="InterPro" id="IPR011545">
    <property type="entry name" value="DEAD/DEAH_box_helicase_dom"/>
</dbReference>
<dbReference type="InterPro" id="IPR050079">
    <property type="entry name" value="DEAD_box_RNA_helicase"/>
</dbReference>
<dbReference type="InterPro" id="IPR014001">
    <property type="entry name" value="Helicase_ATP-bd"/>
</dbReference>
<dbReference type="InterPro" id="IPR001650">
    <property type="entry name" value="Helicase_C-like"/>
</dbReference>
<dbReference type="InterPro" id="IPR027417">
    <property type="entry name" value="P-loop_NTPase"/>
</dbReference>
<dbReference type="InterPro" id="IPR000629">
    <property type="entry name" value="RNA-helicase_DEAD-box_CS"/>
</dbReference>
<dbReference type="InterPro" id="IPR023554">
    <property type="entry name" value="RNA_helicase_ATP-dep_RhlB"/>
</dbReference>
<dbReference type="InterPro" id="IPR014014">
    <property type="entry name" value="RNA_helicase_DEAD_Q_motif"/>
</dbReference>
<dbReference type="NCBIfam" id="NF003419">
    <property type="entry name" value="PRK04837.1"/>
    <property type="match status" value="1"/>
</dbReference>
<dbReference type="PANTHER" id="PTHR47959:SF10">
    <property type="entry name" value="ATP-DEPENDENT RNA HELICASE RHLB"/>
    <property type="match status" value="1"/>
</dbReference>
<dbReference type="PANTHER" id="PTHR47959">
    <property type="entry name" value="ATP-DEPENDENT RNA HELICASE RHLE-RELATED"/>
    <property type="match status" value="1"/>
</dbReference>
<dbReference type="Pfam" id="PF00270">
    <property type="entry name" value="DEAD"/>
    <property type="match status" value="1"/>
</dbReference>
<dbReference type="Pfam" id="PF00271">
    <property type="entry name" value="Helicase_C"/>
    <property type="match status" value="1"/>
</dbReference>
<dbReference type="SMART" id="SM00487">
    <property type="entry name" value="DEXDc"/>
    <property type="match status" value="1"/>
</dbReference>
<dbReference type="SMART" id="SM00490">
    <property type="entry name" value="HELICc"/>
    <property type="match status" value="1"/>
</dbReference>
<dbReference type="SUPFAM" id="SSF52540">
    <property type="entry name" value="P-loop containing nucleoside triphosphate hydrolases"/>
    <property type="match status" value="1"/>
</dbReference>
<dbReference type="PROSITE" id="PS00039">
    <property type="entry name" value="DEAD_ATP_HELICASE"/>
    <property type="match status" value="1"/>
</dbReference>
<dbReference type="PROSITE" id="PS51192">
    <property type="entry name" value="HELICASE_ATP_BIND_1"/>
    <property type="match status" value="1"/>
</dbReference>
<dbReference type="PROSITE" id="PS51194">
    <property type="entry name" value="HELICASE_CTER"/>
    <property type="match status" value="1"/>
</dbReference>
<dbReference type="PROSITE" id="PS51195">
    <property type="entry name" value="Q_MOTIF"/>
    <property type="match status" value="1"/>
</dbReference>